<accession>Q5UP76</accession>
<evidence type="ECO:0000255" key="1"/>
<gene>
    <name type="ordered locus">MIMI_L611</name>
</gene>
<reference key="1">
    <citation type="journal article" date="2004" name="Science">
        <title>The 1.2-megabase genome sequence of Mimivirus.</title>
        <authorList>
            <person name="Raoult D."/>
            <person name="Audic S."/>
            <person name="Robert C."/>
            <person name="Abergel C."/>
            <person name="Renesto P."/>
            <person name="Ogata H."/>
            <person name="La Scola B."/>
            <person name="Susan M."/>
            <person name="Claverie J.-M."/>
        </authorList>
    </citation>
    <scope>NUCLEOTIDE SEQUENCE [LARGE SCALE GENOMIC DNA]</scope>
    <source>
        <strain>Rowbotham-Bradford</strain>
    </source>
</reference>
<organismHost>
    <name type="scientific">Acanthamoeba polyphaga</name>
    <name type="common">Amoeba</name>
    <dbReference type="NCBI Taxonomy" id="5757"/>
</organismHost>
<proteinExistence type="predicted"/>
<protein>
    <recommendedName>
        <fullName>Uncharacterized protein L611</fullName>
    </recommendedName>
</protein>
<organism>
    <name type="scientific">Acanthamoeba polyphaga mimivirus</name>
    <name type="common">APMV</name>
    <dbReference type="NCBI Taxonomy" id="212035"/>
    <lineage>
        <taxon>Viruses</taxon>
        <taxon>Varidnaviria</taxon>
        <taxon>Bamfordvirae</taxon>
        <taxon>Nucleocytoviricota</taxon>
        <taxon>Megaviricetes</taxon>
        <taxon>Imitervirales</taxon>
        <taxon>Mimiviridae</taxon>
        <taxon>Megamimivirinae</taxon>
        <taxon>Mimivirus</taxon>
        <taxon>Mimivirus bradfordmassiliense</taxon>
    </lineage>
</organism>
<keyword id="KW-0175">Coiled coil</keyword>
<keyword id="KW-1185">Reference proteome</keyword>
<sequence length="956" mass="107817">MEQTNETVQDVQDVQVAGVNEANQVTQNVEPSLISLEKSIFATHSVGRVGILLIDASNSVTFNKINDKIVFDKMVEIVKNLPESEFRCIFWNSDNNRFIDSKSSKFKNGVQVFPSVFKKETINQIFTIVKSSIDEHCLTWPHLSFNAIPDSWINNTDPINIYFITDGEMGHRNIGVEEMMSLKMNLKNSIQKIFDKFNSIRLNIITLEPIVRDFTQMESLRSAAGCDVYNVIMENQMTRYITKFTSYTPDNTNGFVHISRNIPPPGYVPFGDKYFSEIHKNEFVKYILRLVKSTSNEDDLLKIVQNLSTTVSVLTKDKPPQTIRQTVKIFSDLFQKSTLDITLVNYLLEEAVEKETSGSANIFAAYKTKLKDLYKQADELLQTNVSKAIGVNETFLSVLVGNKIISGHARMIDQDTKINGKMWKNSCIDINGVRLPVLPFDTSNQSHMNEQCLRQWMRLLVTRLYNVNTMDDMAIYSVLMMMVRVVASDIDDNVKQAYRKLATIMLKKKRANSDTTELDRLEDGQLPIPNNGKIESFYSYMTKVSANLNLHVSSMTQWYIICLALNNDKLILRQLIHCKDHIEKDFPGIKPSELFDLVKKQIEPVNFVKIPVEYSLDYQCLVTLEDVSNKGGFKFLPHNSLTGDICRPIYVLSEEGQAGLIADPNTSICPICYAQLTHKDFEKVGPKVQQEELNVFTDSSEYKNLFGLNQSIQTITSSASPVISTFTTTANPSTQGFPGFDGRNVVLNKKGTLVIMKGTVGAGKSSISLLIKQEVENNGGHCFVEGTDKYCKTGLSTVEAIQEIKLSLSKINLITDDKPIVVVIDTCGERNNGDVAFDVKFTGWNKINVFVNHIRSEMNGYLAWTLRNVLRRTKPTDSDNHFLNPESAGLKVCMDVHRNKATALFGKKIPVLFSSTPNSINEAIEKLNEAADAYQAIIDQQKPLTDQVKLVIDKIF</sequence>
<dbReference type="EMBL" id="AY653733">
    <property type="protein sequence ID" value="AAV50873.1"/>
    <property type="molecule type" value="Genomic_DNA"/>
</dbReference>
<dbReference type="KEGG" id="vg:9925251"/>
<dbReference type="OrthoDB" id="30261at10239"/>
<dbReference type="Proteomes" id="UP000001134">
    <property type="component" value="Genome"/>
</dbReference>
<feature type="chain" id="PRO_0000253287" description="Uncharacterized protein L611">
    <location>
        <begin position="1"/>
        <end position="956"/>
    </location>
</feature>
<feature type="coiled-coil region" evidence="1">
    <location>
        <begin position="918"/>
        <end position="942"/>
    </location>
</feature>
<name>YL611_MIMIV</name>